<proteinExistence type="inferred from homology"/>
<keyword id="KW-0963">Cytoplasm</keyword>
<keyword id="KW-0227">DNA damage</keyword>
<keyword id="KW-0233">DNA recombination</keyword>
<keyword id="KW-0234">DNA repair</keyword>
<keyword id="KW-0238">DNA-binding</keyword>
<keyword id="KW-1185">Reference proteome</keyword>
<evidence type="ECO:0000255" key="1">
    <source>
        <dbReference type="HAMAP-Rule" id="MF_00031"/>
    </source>
</evidence>
<feature type="chain" id="PRO_0000224891" description="Holliday junction branch migration complex subunit RuvA">
    <location>
        <begin position="1"/>
        <end position="224"/>
    </location>
</feature>
<feature type="region of interest" description="Domain I" evidence="1">
    <location>
        <begin position="1"/>
        <end position="67"/>
    </location>
</feature>
<feature type="region of interest" description="Domain II" evidence="1">
    <location>
        <begin position="68"/>
        <end position="146"/>
    </location>
</feature>
<feature type="region of interest" description="Flexible linker" evidence="1">
    <location>
        <begin position="147"/>
        <end position="157"/>
    </location>
</feature>
<feature type="region of interest" description="Domain III" evidence="1">
    <location>
        <begin position="157"/>
        <end position="224"/>
    </location>
</feature>
<organism>
    <name type="scientific">Prochlorococcus marinus (strain NATL2A)</name>
    <dbReference type="NCBI Taxonomy" id="59920"/>
    <lineage>
        <taxon>Bacteria</taxon>
        <taxon>Bacillati</taxon>
        <taxon>Cyanobacteriota</taxon>
        <taxon>Cyanophyceae</taxon>
        <taxon>Synechococcales</taxon>
        <taxon>Prochlorococcaceae</taxon>
        <taxon>Prochlorococcus</taxon>
    </lineage>
</organism>
<dbReference type="EMBL" id="CP000095">
    <property type="protein sequence ID" value="AAZ57760.1"/>
    <property type="molecule type" value="Genomic_DNA"/>
</dbReference>
<dbReference type="RefSeq" id="WP_011293802.1">
    <property type="nucleotide sequence ID" value="NC_007335.2"/>
</dbReference>
<dbReference type="SMR" id="Q46L68"/>
<dbReference type="STRING" id="59920.PMN2A_0268"/>
<dbReference type="KEGG" id="pmn:PMN2A_0268"/>
<dbReference type="HOGENOM" id="CLU_087936_0_0_3"/>
<dbReference type="OrthoDB" id="5293449at2"/>
<dbReference type="PhylomeDB" id="Q46L68"/>
<dbReference type="Proteomes" id="UP000002535">
    <property type="component" value="Chromosome"/>
</dbReference>
<dbReference type="GO" id="GO:0005737">
    <property type="term" value="C:cytoplasm"/>
    <property type="evidence" value="ECO:0007669"/>
    <property type="project" value="UniProtKB-SubCell"/>
</dbReference>
<dbReference type="GO" id="GO:0048476">
    <property type="term" value="C:Holliday junction resolvase complex"/>
    <property type="evidence" value="ECO:0007669"/>
    <property type="project" value="UniProtKB-UniRule"/>
</dbReference>
<dbReference type="GO" id="GO:0005524">
    <property type="term" value="F:ATP binding"/>
    <property type="evidence" value="ECO:0007669"/>
    <property type="project" value="InterPro"/>
</dbReference>
<dbReference type="GO" id="GO:0000400">
    <property type="term" value="F:four-way junction DNA binding"/>
    <property type="evidence" value="ECO:0007669"/>
    <property type="project" value="UniProtKB-UniRule"/>
</dbReference>
<dbReference type="GO" id="GO:0009378">
    <property type="term" value="F:four-way junction helicase activity"/>
    <property type="evidence" value="ECO:0007669"/>
    <property type="project" value="InterPro"/>
</dbReference>
<dbReference type="GO" id="GO:0006310">
    <property type="term" value="P:DNA recombination"/>
    <property type="evidence" value="ECO:0007669"/>
    <property type="project" value="UniProtKB-UniRule"/>
</dbReference>
<dbReference type="GO" id="GO:0006281">
    <property type="term" value="P:DNA repair"/>
    <property type="evidence" value="ECO:0007669"/>
    <property type="project" value="UniProtKB-UniRule"/>
</dbReference>
<dbReference type="Gene3D" id="1.10.150.20">
    <property type="entry name" value="5' to 3' exonuclease, C-terminal subdomain"/>
    <property type="match status" value="1"/>
</dbReference>
<dbReference type="Gene3D" id="2.40.50.140">
    <property type="entry name" value="Nucleic acid-binding proteins"/>
    <property type="match status" value="1"/>
</dbReference>
<dbReference type="HAMAP" id="MF_00031">
    <property type="entry name" value="DNA_HJ_migration_RuvA"/>
    <property type="match status" value="1"/>
</dbReference>
<dbReference type="InterPro" id="IPR013849">
    <property type="entry name" value="DNA_helicase_Holl-junc_RuvA_I"/>
</dbReference>
<dbReference type="InterPro" id="IPR003583">
    <property type="entry name" value="Hlx-hairpin-Hlx_DNA-bd_motif"/>
</dbReference>
<dbReference type="InterPro" id="IPR012340">
    <property type="entry name" value="NA-bd_OB-fold"/>
</dbReference>
<dbReference type="InterPro" id="IPR000085">
    <property type="entry name" value="RuvA"/>
</dbReference>
<dbReference type="InterPro" id="IPR010994">
    <property type="entry name" value="RuvA_2-like"/>
</dbReference>
<dbReference type="NCBIfam" id="TIGR00084">
    <property type="entry name" value="ruvA"/>
    <property type="match status" value="1"/>
</dbReference>
<dbReference type="Pfam" id="PF14520">
    <property type="entry name" value="HHH_5"/>
    <property type="match status" value="1"/>
</dbReference>
<dbReference type="Pfam" id="PF01330">
    <property type="entry name" value="RuvA_N"/>
    <property type="match status" value="1"/>
</dbReference>
<dbReference type="SMART" id="SM00278">
    <property type="entry name" value="HhH1"/>
    <property type="match status" value="2"/>
</dbReference>
<dbReference type="SUPFAM" id="SSF50249">
    <property type="entry name" value="Nucleic acid-binding proteins"/>
    <property type="match status" value="1"/>
</dbReference>
<dbReference type="SUPFAM" id="SSF47781">
    <property type="entry name" value="RuvA domain 2-like"/>
    <property type="match status" value="1"/>
</dbReference>
<accession>Q46L68</accession>
<gene>
    <name evidence="1" type="primary">ruvA</name>
    <name type="ordered locus">PMN2A_0268</name>
</gene>
<reference key="1">
    <citation type="journal article" date="2007" name="PLoS Genet.">
        <title>Patterns and implications of gene gain and loss in the evolution of Prochlorococcus.</title>
        <authorList>
            <person name="Kettler G.C."/>
            <person name="Martiny A.C."/>
            <person name="Huang K."/>
            <person name="Zucker J."/>
            <person name="Coleman M.L."/>
            <person name="Rodrigue S."/>
            <person name="Chen F."/>
            <person name="Lapidus A."/>
            <person name="Ferriera S."/>
            <person name="Johnson J."/>
            <person name="Steglich C."/>
            <person name="Church G.M."/>
            <person name="Richardson P."/>
            <person name="Chisholm S.W."/>
        </authorList>
    </citation>
    <scope>NUCLEOTIDE SEQUENCE [LARGE SCALE GENOMIC DNA]</scope>
    <source>
        <strain>NATL2A</strain>
    </source>
</reference>
<protein>
    <recommendedName>
        <fullName evidence="1">Holliday junction branch migration complex subunit RuvA</fullName>
    </recommendedName>
</protein>
<sequence length="224" mass="25744">MISWLKGEKVHTWKISSRKGVVLNVGGVGYEIQLLPKQIDKAEVLNEFELWIHQIDREDGTSLYGFIEVNQRDLFREIISVNGIGPQIGMAMLEEFEVPQLVNAIENKESNLLTKTQGIGKRIAERLIVELRNKLQRFTDNDKTIHENKNDIEANQFSKYIDEIYLILNSLGYVDNEIKESIKIITINEKENSLLLNSSSAEEKADLMDKHLKEILMKLSEKST</sequence>
<name>RUVA_PROMT</name>
<comment type="function">
    <text evidence="1">The RuvA-RuvB-RuvC complex processes Holliday junction (HJ) DNA during genetic recombination and DNA repair, while the RuvA-RuvB complex plays an important role in the rescue of blocked DNA replication forks via replication fork reversal (RFR). RuvA specifically binds to HJ cruciform DNA, conferring on it an open structure. The RuvB hexamer acts as an ATP-dependent pump, pulling dsDNA into and through the RuvAB complex. HJ branch migration allows RuvC to scan DNA until it finds its consensus sequence, where it cleaves and resolves the cruciform DNA.</text>
</comment>
<comment type="subunit">
    <text evidence="1">Homotetramer. Forms an RuvA(8)-RuvB(12)-Holliday junction (HJ) complex. HJ DNA is sandwiched between 2 RuvA tetramers; dsDNA enters through RuvA and exits via RuvB. An RuvB hexamer assembles on each DNA strand where it exits the tetramer. Each RuvB hexamer is contacted by two RuvA subunits (via domain III) on 2 adjacent RuvB subunits; this complex drives branch migration. In the full resolvosome a probable DNA-RuvA(4)-RuvB(12)-RuvC(2) complex forms which resolves the HJ.</text>
</comment>
<comment type="subcellular location">
    <subcellularLocation>
        <location evidence="1">Cytoplasm</location>
    </subcellularLocation>
</comment>
<comment type="domain">
    <text evidence="1">Has three domains with a flexible linker between the domains II and III and assumes an 'L' shape. Domain III is highly mobile and contacts RuvB.</text>
</comment>
<comment type="similarity">
    <text evidence="1">Belongs to the RuvA family.</text>
</comment>